<feature type="chain" id="PRO_0000417414" description="NAD-dependent protein deacetylase hst4">
    <location>
        <begin position="1"/>
        <end position="595"/>
    </location>
</feature>
<feature type="domain" description="Deacetylase sirtuin-type" evidence="2">
    <location>
        <begin position="109"/>
        <end position="428"/>
    </location>
</feature>
<feature type="region of interest" description="Disordered" evidence="3">
    <location>
        <begin position="1"/>
        <end position="106"/>
    </location>
</feature>
<feature type="region of interest" description="Disordered" evidence="3">
    <location>
        <begin position="445"/>
        <end position="595"/>
    </location>
</feature>
<feature type="compositionally biased region" description="Low complexity" evidence="3">
    <location>
        <begin position="9"/>
        <end position="32"/>
    </location>
</feature>
<feature type="compositionally biased region" description="Polar residues" evidence="3">
    <location>
        <begin position="445"/>
        <end position="473"/>
    </location>
</feature>
<feature type="compositionally biased region" description="Basic and acidic residues" evidence="3">
    <location>
        <begin position="478"/>
        <end position="492"/>
    </location>
</feature>
<feature type="compositionally biased region" description="Basic and acidic residues" evidence="3">
    <location>
        <begin position="530"/>
        <end position="543"/>
    </location>
</feature>
<feature type="active site" description="Proton acceptor" evidence="2">
    <location>
        <position position="253"/>
    </location>
</feature>
<feature type="binding site" evidence="1">
    <location>
        <begin position="134"/>
        <end position="153"/>
    </location>
    <ligand>
        <name>NAD(+)</name>
        <dbReference type="ChEBI" id="CHEBI:57540"/>
    </ligand>
</feature>
<feature type="binding site" evidence="1">
    <location>
        <begin position="222"/>
        <end position="225"/>
    </location>
    <ligand>
        <name>NAD(+)</name>
        <dbReference type="ChEBI" id="CHEBI:57540"/>
    </ligand>
</feature>
<feature type="binding site" evidence="2">
    <location>
        <position position="261"/>
    </location>
    <ligand>
        <name>Zn(2+)</name>
        <dbReference type="ChEBI" id="CHEBI:29105"/>
    </ligand>
</feature>
<feature type="binding site" evidence="2">
    <location>
        <position position="264"/>
    </location>
    <ligand>
        <name>Zn(2+)</name>
        <dbReference type="ChEBI" id="CHEBI:29105"/>
    </ligand>
</feature>
<feature type="binding site" evidence="2">
    <location>
        <position position="283"/>
    </location>
    <ligand>
        <name>Zn(2+)</name>
        <dbReference type="ChEBI" id="CHEBI:29105"/>
    </ligand>
</feature>
<feature type="binding site" evidence="2">
    <location>
        <position position="286"/>
    </location>
    <ligand>
        <name>Zn(2+)</name>
        <dbReference type="ChEBI" id="CHEBI:29105"/>
    </ligand>
</feature>
<feature type="binding site" evidence="1">
    <location>
        <begin position="342"/>
        <end position="344"/>
    </location>
    <ligand>
        <name>NAD(+)</name>
        <dbReference type="ChEBI" id="CHEBI:57540"/>
    </ligand>
</feature>
<feature type="binding site" evidence="1">
    <location>
        <begin position="373"/>
        <end position="375"/>
    </location>
    <ligand>
        <name>NAD(+)</name>
        <dbReference type="ChEBI" id="CHEBI:57540"/>
    </ligand>
</feature>
<feature type="binding site" evidence="1">
    <location>
        <position position="394"/>
    </location>
    <ligand>
        <name>NAD(+)</name>
        <dbReference type="ChEBI" id="CHEBI:57540"/>
    </ligand>
</feature>
<organism>
    <name type="scientific">Emericella nidulans (strain FGSC A4 / ATCC 38163 / CBS 112.46 / NRRL 194 / M139)</name>
    <name type="common">Aspergillus nidulans</name>
    <dbReference type="NCBI Taxonomy" id="227321"/>
    <lineage>
        <taxon>Eukaryota</taxon>
        <taxon>Fungi</taxon>
        <taxon>Dikarya</taxon>
        <taxon>Ascomycota</taxon>
        <taxon>Pezizomycotina</taxon>
        <taxon>Eurotiomycetes</taxon>
        <taxon>Eurotiomycetidae</taxon>
        <taxon>Eurotiales</taxon>
        <taxon>Aspergillaceae</taxon>
        <taxon>Aspergillus</taxon>
        <taxon>Aspergillus subgen. Nidulantes</taxon>
    </lineage>
</organism>
<keyword id="KW-0479">Metal-binding</keyword>
<keyword id="KW-0520">NAD</keyword>
<keyword id="KW-0539">Nucleus</keyword>
<keyword id="KW-1185">Reference proteome</keyword>
<keyword id="KW-0678">Repressor</keyword>
<keyword id="KW-0804">Transcription</keyword>
<keyword id="KW-0805">Transcription regulation</keyword>
<keyword id="KW-0808">Transferase</keyword>
<keyword id="KW-0862">Zinc</keyword>
<reference key="1">
    <citation type="journal article" date="2005" name="Nature">
        <title>Sequencing of Aspergillus nidulans and comparative analysis with A. fumigatus and A. oryzae.</title>
        <authorList>
            <person name="Galagan J.E."/>
            <person name="Calvo S.E."/>
            <person name="Cuomo C."/>
            <person name="Ma L.-J."/>
            <person name="Wortman J.R."/>
            <person name="Batzoglou S."/>
            <person name="Lee S.-I."/>
            <person name="Bastuerkmen M."/>
            <person name="Spevak C.C."/>
            <person name="Clutterbuck J."/>
            <person name="Kapitonov V."/>
            <person name="Jurka J."/>
            <person name="Scazzocchio C."/>
            <person name="Farman M.L."/>
            <person name="Butler J."/>
            <person name="Purcell S."/>
            <person name="Harris S."/>
            <person name="Braus G.H."/>
            <person name="Draht O."/>
            <person name="Busch S."/>
            <person name="D'Enfert C."/>
            <person name="Bouchier C."/>
            <person name="Goldman G.H."/>
            <person name="Bell-Pedersen D."/>
            <person name="Griffiths-Jones S."/>
            <person name="Doonan J.H."/>
            <person name="Yu J."/>
            <person name="Vienken K."/>
            <person name="Pain A."/>
            <person name="Freitag M."/>
            <person name="Selker E.U."/>
            <person name="Archer D.B."/>
            <person name="Penalva M.A."/>
            <person name="Oakley B.R."/>
            <person name="Momany M."/>
            <person name="Tanaka T."/>
            <person name="Kumagai T."/>
            <person name="Asai K."/>
            <person name="Machida M."/>
            <person name="Nierman W.C."/>
            <person name="Denning D.W."/>
            <person name="Caddick M.X."/>
            <person name="Hynes M."/>
            <person name="Paoletti M."/>
            <person name="Fischer R."/>
            <person name="Miller B.L."/>
            <person name="Dyer P.S."/>
            <person name="Sachs M.S."/>
            <person name="Osmani S.A."/>
            <person name="Birren B.W."/>
        </authorList>
    </citation>
    <scope>NUCLEOTIDE SEQUENCE [LARGE SCALE GENOMIC DNA]</scope>
    <source>
        <strain>FGSC A4 / ATCC 38163 / CBS 112.46 / NRRL 194 / M139</strain>
    </source>
</reference>
<reference key="2">
    <citation type="journal article" date="2009" name="Fungal Genet. Biol.">
        <title>The 2008 update of the Aspergillus nidulans genome annotation: a community effort.</title>
        <authorList>
            <person name="Wortman J.R."/>
            <person name="Gilsenan J.M."/>
            <person name="Joardar V."/>
            <person name="Deegan J."/>
            <person name="Clutterbuck J."/>
            <person name="Andersen M.R."/>
            <person name="Archer D."/>
            <person name="Bencina M."/>
            <person name="Braus G."/>
            <person name="Coutinho P."/>
            <person name="von Dohren H."/>
            <person name="Doonan J."/>
            <person name="Driessen A.J."/>
            <person name="Durek P."/>
            <person name="Espeso E."/>
            <person name="Fekete E."/>
            <person name="Flipphi M."/>
            <person name="Estrada C.G."/>
            <person name="Geysens S."/>
            <person name="Goldman G."/>
            <person name="de Groot P.W."/>
            <person name="Hansen K."/>
            <person name="Harris S.D."/>
            <person name="Heinekamp T."/>
            <person name="Helmstaedt K."/>
            <person name="Henrissat B."/>
            <person name="Hofmann G."/>
            <person name="Homan T."/>
            <person name="Horio T."/>
            <person name="Horiuchi H."/>
            <person name="James S."/>
            <person name="Jones M."/>
            <person name="Karaffa L."/>
            <person name="Karanyi Z."/>
            <person name="Kato M."/>
            <person name="Keller N."/>
            <person name="Kelly D.E."/>
            <person name="Kiel J.A."/>
            <person name="Kim J.M."/>
            <person name="van der Klei I.J."/>
            <person name="Klis F.M."/>
            <person name="Kovalchuk A."/>
            <person name="Krasevec N."/>
            <person name="Kubicek C.P."/>
            <person name="Liu B."/>
            <person name="Maccabe A."/>
            <person name="Meyer V."/>
            <person name="Mirabito P."/>
            <person name="Miskei M."/>
            <person name="Mos M."/>
            <person name="Mullins J."/>
            <person name="Nelson D.R."/>
            <person name="Nielsen J."/>
            <person name="Oakley B.R."/>
            <person name="Osmani S.A."/>
            <person name="Pakula T."/>
            <person name="Paszewski A."/>
            <person name="Paulsen I."/>
            <person name="Pilsyk S."/>
            <person name="Pocsi I."/>
            <person name="Punt P.J."/>
            <person name="Ram A.F."/>
            <person name="Ren Q."/>
            <person name="Robellet X."/>
            <person name="Robson G."/>
            <person name="Seiboth B."/>
            <person name="van Solingen P."/>
            <person name="Specht T."/>
            <person name="Sun J."/>
            <person name="Taheri-Talesh N."/>
            <person name="Takeshita N."/>
            <person name="Ussery D."/>
            <person name="vanKuyk P.A."/>
            <person name="Visser H."/>
            <person name="van de Vondervoort P.J."/>
            <person name="de Vries R.P."/>
            <person name="Walton J."/>
            <person name="Xiang X."/>
            <person name="Xiong Y."/>
            <person name="Zeng A.P."/>
            <person name="Brandt B.W."/>
            <person name="Cornell M.J."/>
            <person name="van den Hondel C.A."/>
            <person name="Visser J."/>
            <person name="Oliver S.G."/>
            <person name="Turner G."/>
        </authorList>
    </citation>
    <scope>GENOME REANNOTATION</scope>
    <source>
        <strain>FGSC A4 / ATCC 38163 / CBS 112.46 / NRRL 194 / M139</strain>
    </source>
</reference>
<dbReference type="EC" id="2.3.1.286" evidence="2"/>
<dbReference type="EMBL" id="AACD01000017">
    <property type="protein sequence ID" value="EAA65819.1"/>
    <property type="molecule type" value="Genomic_DNA"/>
</dbReference>
<dbReference type="EMBL" id="BN001308">
    <property type="protein sequence ID" value="CBF87899.1"/>
    <property type="molecule type" value="Genomic_DNA"/>
</dbReference>
<dbReference type="RefSeq" id="XP_658830.1">
    <property type="nucleotide sequence ID" value="XM_653738.1"/>
</dbReference>
<dbReference type="SMR" id="Q5BE04"/>
<dbReference type="FunCoup" id="Q5BE04">
    <property type="interactions" value="68"/>
</dbReference>
<dbReference type="STRING" id="227321.Q5BE04"/>
<dbReference type="EnsemblFungi" id="CBF87899">
    <property type="protein sequence ID" value="CBF87899"/>
    <property type="gene ID" value="ANIA_01226"/>
</dbReference>
<dbReference type="KEGG" id="ani:ANIA_01226"/>
<dbReference type="VEuPathDB" id="FungiDB:AN1226"/>
<dbReference type="eggNOG" id="KOG2684">
    <property type="taxonomic scope" value="Eukaryota"/>
</dbReference>
<dbReference type="HOGENOM" id="CLU_021544_2_1_1"/>
<dbReference type="InParanoid" id="Q5BE04"/>
<dbReference type="OMA" id="MFINNEP"/>
<dbReference type="OrthoDB" id="2919105at2759"/>
<dbReference type="Proteomes" id="UP000000560">
    <property type="component" value="Chromosome VIII"/>
</dbReference>
<dbReference type="GO" id="GO:0031934">
    <property type="term" value="C:mating-type region heterochromatin"/>
    <property type="evidence" value="ECO:0000318"/>
    <property type="project" value="GO_Central"/>
</dbReference>
<dbReference type="GO" id="GO:0005634">
    <property type="term" value="C:nucleus"/>
    <property type="evidence" value="ECO:0000318"/>
    <property type="project" value="GO_Central"/>
</dbReference>
<dbReference type="GO" id="GO:0017136">
    <property type="term" value="F:histone deacetylase activity, NAD-dependent"/>
    <property type="evidence" value="ECO:0000318"/>
    <property type="project" value="GO_Central"/>
</dbReference>
<dbReference type="GO" id="GO:0046872">
    <property type="term" value="F:metal ion binding"/>
    <property type="evidence" value="ECO:0007669"/>
    <property type="project" value="UniProtKB-KW"/>
</dbReference>
<dbReference type="GO" id="GO:0070403">
    <property type="term" value="F:NAD+ binding"/>
    <property type="evidence" value="ECO:0000318"/>
    <property type="project" value="GO_Central"/>
</dbReference>
<dbReference type="GO" id="GO:0000122">
    <property type="term" value="P:negative regulation of transcription by RNA polymerase II"/>
    <property type="evidence" value="ECO:0000318"/>
    <property type="project" value="GO_Central"/>
</dbReference>
<dbReference type="GO" id="GO:0031508">
    <property type="term" value="P:pericentric heterochromatin formation"/>
    <property type="evidence" value="ECO:0000318"/>
    <property type="project" value="GO_Central"/>
</dbReference>
<dbReference type="GO" id="GO:0000183">
    <property type="term" value="P:rDNA heterochromatin formation"/>
    <property type="evidence" value="ECO:0000318"/>
    <property type="project" value="GO_Central"/>
</dbReference>
<dbReference type="GO" id="GO:1990414">
    <property type="term" value="P:replication-born double-strand break repair via sister chromatid exchange"/>
    <property type="evidence" value="ECO:0000318"/>
    <property type="project" value="GO_Central"/>
</dbReference>
<dbReference type="FunFam" id="3.30.1600.10:FF:000006">
    <property type="entry name" value="SIR2 family histone deacetylase"/>
    <property type="match status" value="1"/>
</dbReference>
<dbReference type="Gene3D" id="3.30.1600.10">
    <property type="entry name" value="SIR2/SIRT2 'Small Domain"/>
    <property type="match status" value="1"/>
</dbReference>
<dbReference type="Gene3D" id="3.40.50.1220">
    <property type="entry name" value="TPP-binding domain"/>
    <property type="match status" value="1"/>
</dbReference>
<dbReference type="InterPro" id="IPR029035">
    <property type="entry name" value="DHS-like_NAD/FAD-binding_dom"/>
</dbReference>
<dbReference type="InterPro" id="IPR050134">
    <property type="entry name" value="NAD-dep_sirtuin_deacylases"/>
</dbReference>
<dbReference type="InterPro" id="IPR003000">
    <property type="entry name" value="Sirtuin"/>
</dbReference>
<dbReference type="InterPro" id="IPR026591">
    <property type="entry name" value="Sirtuin_cat_small_dom_sf"/>
</dbReference>
<dbReference type="InterPro" id="IPR026590">
    <property type="entry name" value="Ssirtuin_cat_dom"/>
</dbReference>
<dbReference type="PANTHER" id="PTHR11085:SF15">
    <property type="entry name" value="NAD-DEPENDENT HISTONE DEACETYLASE HST4"/>
    <property type="match status" value="1"/>
</dbReference>
<dbReference type="PANTHER" id="PTHR11085">
    <property type="entry name" value="NAD-DEPENDENT PROTEIN DEACYLASE SIRTUIN-5, MITOCHONDRIAL-RELATED"/>
    <property type="match status" value="1"/>
</dbReference>
<dbReference type="Pfam" id="PF02146">
    <property type="entry name" value="SIR2"/>
    <property type="match status" value="1"/>
</dbReference>
<dbReference type="SUPFAM" id="SSF52467">
    <property type="entry name" value="DHS-like NAD/FAD-binding domain"/>
    <property type="match status" value="1"/>
</dbReference>
<dbReference type="PROSITE" id="PS50305">
    <property type="entry name" value="SIRTUIN"/>
    <property type="match status" value="1"/>
</dbReference>
<accession>Q5BE04</accession>
<accession>C8VSR5</accession>
<sequence>MAPRKTKPATKPAAKPTPASTATTSSCPSPKSFPIPMEVDDFSFSDSELSDAQSLIEPEGFSLLSPDESSGGRSQDELPPARKKRRVAGPKERRTQHLDLTPRLGFSDYGDQEPQLNLLVNTIRNHKKIVVIAGAGISTSAGIPDFRSDDGLFKTLQKKHNLKASGKLMFDAAVYQDEALTASFQEMVRSLSEEAEKSSPTAFHHMLARLGSDNRLTRLYTQNIDGIETSMPPLATQIPLNVKAPWPRTIQLHGSLEKMVCQKCRHMSTFDRVMFDRPDAPECPECVLTNQFRMETGQRSHGIGKMRPRIVLYNEHNPDEEAITSVMNADIRSRPDALIVVGTSLKIPGVRRLVKSLCSVIRSRRNGVTMWINNEPPSGKEFEDCFDLLVKGDCEEVARLAQLKRWDDDSKPIFDECQSADVERVKNEQGPLSVVITTPKKEKVQAQTGMLTPSSSYDGDVENASTTTLSNPASKGRKLTEILKASKKDAPKTESAGVKKPAPRKRTKKEPVKNAKITTFSKVTKAQKVTPEEKSVKLEEHKAMHPLPPGAARTNAPMLPGLAKDDSKSTPSGKRGQLETISPDRIPKGMGKLLD</sequence>
<gene>
    <name type="ORF">AN1226</name>
</gene>
<name>HST4_EMENI</name>
<evidence type="ECO:0000250" key="1"/>
<evidence type="ECO:0000255" key="2">
    <source>
        <dbReference type="PROSITE-ProRule" id="PRU00236"/>
    </source>
</evidence>
<evidence type="ECO:0000256" key="3">
    <source>
        <dbReference type="SAM" id="MobiDB-lite"/>
    </source>
</evidence>
<evidence type="ECO:0000305" key="4"/>
<proteinExistence type="inferred from homology"/>
<comment type="function">
    <text evidence="1">NAD-dependent histone deacetylase, which could function in telomeric silencing, cell cycle progression and chromosome stability.</text>
</comment>
<comment type="catalytic activity">
    <reaction evidence="2">
        <text>N(6)-acetyl-L-lysyl-[protein] + NAD(+) + H2O = 2''-O-acetyl-ADP-D-ribose + nicotinamide + L-lysyl-[protein]</text>
        <dbReference type="Rhea" id="RHEA:43636"/>
        <dbReference type="Rhea" id="RHEA-COMP:9752"/>
        <dbReference type="Rhea" id="RHEA-COMP:10731"/>
        <dbReference type="ChEBI" id="CHEBI:15377"/>
        <dbReference type="ChEBI" id="CHEBI:17154"/>
        <dbReference type="ChEBI" id="CHEBI:29969"/>
        <dbReference type="ChEBI" id="CHEBI:57540"/>
        <dbReference type="ChEBI" id="CHEBI:61930"/>
        <dbReference type="ChEBI" id="CHEBI:83767"/>
        <dbReference type="EC" id="2.3.1.286"/>
    </reaction>
</comment>
<comment type="cofactor">
    <cofactor evidence="1">
        <name>Zn(2+)</name>
        <dbReference type="ChEBI" id="CHEBI:29105"/>
    </cofactor>
    <text evidence="1">Binds 1 zinc ion per subunit.</text>
</comment>
<comment type="subcellular location">
    <subcellularLocation>
        <location evidence="1">Nucleus</location>
    </subcellularLocation>
</comment>
<comment type="similarity">
    <text evidence="4">Belongs to the sirtuin family. Class I subfamily.</text>
</comment>
<protein>
    <recommendedName>
        <fullName>NAD-dependent protein deacetylase hst4</fullName>
        <ecNumber evidence="2">2.3.1.286</ecNumber>
    </recommendedName>
    <alternativeName>
        <fullName>Homologous to SIR2 protein 4</fullName>
    </alternativeName>
    <alternativeName>
        <fullName>Regulatory protein SIR2 homolog 4</fullName>
    </alternativeName>
</protein>